<accession>B8E1A9</accession>
<dbReference type="EC" id="5.6.1.7" evidence="1"/>
<dbReference type="EMBL" id="CP001251">
    <property type="protein sequence ID" value="ACK42237.1"/>
    <property type="molecule type" value="Genomic_DNA"/>
</dbReference>
<dbReference type="RefSeq" id="WP_012583321.1">
    <property type="nucleotide sequence ID" value="NC_011661.1"/>
</dbReference>
<dbReference type="RefSeq" id="YP_002352851.1">
    <property type="nucleotide sequence ID" value="NC_011661.1"/>
</dbReference>
<dbReference type="SMR" id="B8E1A9"/>
<dbReference type="FunCoup" id="B8E1A9">
    <property type="interactions" value="388"/>
</dbReference>
<dbReference type="STRING" id="515635.Dtur_0957"/>
<dbReference type="EnsemblBacteria" id="ACK42237">
    <property type="protein sequence ID" value="ACK42237"/>
    <property type="gene ID" value="Dtur_0957"/>
</dbReference>
<dbReference type="KEGG" id="dtu:Dtur_0957"/>
<dbReference type="PATRIC" id="fig|515635.4.peg.994"/>
<dbReference type="eggNOG" id="COG0459">
    <property type="taxonomic scope" value="Bacteria"/>
</dbReference>
<dbReference type="HOGENOM" id="CLU_016503_3_0_0"/>
<dbReference type="InParanoid" id="B8E1A9"/>
<dbReference type="OrthoDB" id="9766614at2"/>
<dbReference type="Proteomes" id="UP000007719">
    <property type="component" value="Chromosome"/>
</dbReference>
<dbReference type="GO" id="GO:1990220">
    <property type="term" value="C:GroEL-GroES complex"/>
    <property type="evidence" value="ECO:0000318"/>
    <property type="project" value="GO_Central"/>
</dbReference>
<dbReference type="GO" id="GO:0005524">
    <property type="term" value="F:ATP binding"/>
    <property type="evidence" value="ECO:0000318"/>
    <property type="project" value="GO_Central"/>
</dbReference>
<dbReference type="GO" id="GO:0140662">
    <property type="term" value="F:ATP-dependent protein folding chaperone"/>
    <property type="evidence" value="ECO:0007669"/>
    <property type="project" value="InterPro"/>
</dbReference>
<dbReference type="GO" id="GO:0016853">
    <property type="term" value="F:isomerase activity"/>
    <property type="evidence" value="ECO:0007669"/>
    <property type="project" value="UniProtKB-KW"/>
</dbReference>
<dbReference type="GO" id="GO:0051082">
    <property type="term" value="F:unfolded protein binding"/>
    <property type="evidence" value="ECO:0000318"/>
    <property type="project" value="GO_Central"/>
</dbReference>
<dbReference type="GO" id="GO:0051085">
    <property type="term" value="P:chaperone cofactor-dependent protein refolding"/>
    <property type="evidence" value="ECO:0000318"/>
    <property type="project" value="GO_Central"/>
</dbReference>
<dbReference type="GO" id="GO:0042026">
    <property type="term" value="P:protein refolding"/>
    <property type="evidence" value="ECO:0007669"/>
    <property type="project" value="UniProtKB-UniRule"/>
</dbReference>
<dbReference type="GO" id="GO:0009408">
    <property type="term" value="P:response to heat"/>
    <property type="evidence" value="ECO:0000318"/>
    <property type="project" value="GO_Central"/>
</dbReference>
<dbReference type="CDD" id="cd03344">
    <property type="entry name" value="GroEL"/>
    <property type="match status" value="1"/>
</dbReference>
<dbReference type="FunFam" id="3.50.7.10:FF:000001">
    <property type="entry name" value="60 kDa chaperonin"/>
    <property type="match status" value="1"/>
</dbReference>
<dbReference type="Gene3D" id="3.50.7.10">
    <property type="entry name" value="GroEL"/>
    <property type="match status" value="1"/>
</dbReference>
<dbReference type="Gene3D" id="1.10.560.10">
    <property type="entry name" value="GroEL-like equatorial domain"/>
    <property type="match status" value="1"/>
</dbReference>
<dbReference type="Gene3D" id="3.30.260.10">
    <property type="entry name" value="TCP-1-like chaperonin intermediate domain"/>
    <property type="match status" value="1"/>
</dbReference>
<dbReference type="HAMAP" id="MF_00600">
    <property type="entry name" value="CH60"/>
    <property type="match status" value="1"/>
</dbReference>
<dbReference type="InterPro" id="IPR018370">
    <property type="entry name" value="Chaperonin_Cpn60_CS"/>
</dbReference>
<dbReference type="InterPro" id="IPR001844">
    <property type="entry name" value="Cpn60/GroEL"/>
</dbReference>
<dbReference type="InterPro" id="IPR002423">
    <property type="entry name" value="Cpn60/GroEL/TCP-1"/>
</dbReference>
<dbReference type="InterPro" id="IPR027409">
    <property type="entry name" value="GroEL-like_apical_dom_sf"/>
</dbReference>
<dbReference type="InterPro" id="IPR027413">
    <property type="entry name" value="GROEL-like_equatorial_sf"/>
</dbReference>
<dbReference type="InterPro" id="IPR027410">
    <property type="entry name" value="TCP-1-like_intermed_sf"/>
</dbReference>
<dbReference type="NCBIfam" id="TIGR02348">
    <property type="entry name" value="GroEL"/>
    <property type="match status" value="1"/>
</dbReference>
<dbReference type="NCBIfam" id="NF000592">
    <property type="entry name" value="PRK00013.1"/>
    <property type="match status" value="1"/>
</dbReference>
<dbReference type="NCBIfam" id="NF009487">
    <property type="entry name" value="PRK12849.1"/>
    <property type="match status" value="1"/>
</dbReference>
<dbReference type="NCBIfam" id="NF009488">
    <property type="entry name" value="PRK12850.1"/>
    <property type="match status" value="1"/>
</dbReference>
<dbReference type="NCBIfam" id="NF009489">
    <property type="entry name" value="PRK12851.1"/>
    <property type="match status" value="1"/>
</dbReference>
<dbReference type="PANTHER" id="PTHR45633">
    <property type="entry name" value="60 KDA HEAT SHOCK PROTEIN, MITOCHONDRIAL"/>
    <property type="match status" value="1"/>
</dbReference>
<dbReference type="Pfam" id="PF00118">
    <property type="entry name" value="Cpn60_TCP1"/>
    <property type="match status" value="1"/>
</dbReference>
<dbReference type="PRINTS" id="PR00298">
    <property type="entry name" value="CHAPERONIN60"/>
</dbReference>
<dbReference type="SUPFAM" id="SSF52029">
    <property type="entry name" value="GroEL apical domain-like"/>
    <property type="match status" value="1"/>
</dbReference>
<dbReference type="SUPFAM" id="SSF48592">
    <property type="entry name" value="GroEL equatorial domain-like"/>
    <property type="match status" value="1"/>
</dbReference>
<dbReference type="SUPFAM" id="SSF54849">
    <property type="entry name" value="GroEL-intermediate domain like"/>
    <property type="match status" value="1"/>
</dbReference>
<dbReference type="PROSITE" id="PS00296">
    <property type="entry name" value="CHAPERONINS_CPN60"/>
    <property type="match status" value="1"/>
</dbReference>
<comment type="function">
    <text evidence="1">Together with its co-chaperonin GroES, plays an essential role in assisting protein folding. The GroEL-GroES system forms a nano-cage that allows encapsulation of the non-native substrate proteins and provides a physical environment optimized to promote and accelerate protein folding.</text>
</comment>
<comment type="catalytic activity">
    <reaction evidence="1">
        <text>ATP + H2O + a folded polypeptide = ADP + phosphate + an unfolded polypeptide.</text>
        <dbReference type="EC" id="5.6.1.7"/>
    </reaction>
</comment>
<comment type="subunit">
    <text evidence="1">Forms a cylinder of 14 subunits composed of two heptameric rings stacked back-to-back. Interacts with the co-chaperonin GroES.</text>
</comment>
<comment type="subcellular location">
    <subcellularLocation>
        <location evidence="1">Cytoplasm</location>
    </subcellularLocation>
</comment>
<comment type="similarity">
    <text evidence="1">Belongs to the chaperonin (HSP60) family.</text>
</comment>
<keyword id="KW-0067">ATP-binding</keyword>
<keyword id="KW-0143">Chaperone</keyword>
<keyword id="KW-0963">Cytoplasm</keyword>
<keyword id="KW-0413">Isomerase</keyword>
<keyword id="KW-0547">Nucleotide-binding</keyword>
<keyword id="KW-1185">Reference proteome</keyword>
<feature type="chain" id="PRO_1000130005" description="Chaperonin GroEL">
    <location>
        <begin position="1"/>
        <end position="538"/>
    </location>
</feature>
<feature type="binding site" evidence="1">
    <location>
        <begin position="30"/>
        <end position="33"/>
    </location>
    <ligand>
        <name>ATP</name>
        <dbReference type="ChEBI" id="CHEBI:30616"/>
    </ligand>
</feature>
<feature type="binding site" evidence="1">
    <location>
        <begin position="87"/>
        <end position="91"/>
    </location>
    <ligand>
        <name>ATP</name>
        <dbReference type="ChEBI" id="CHEBI:30616"/>
    </ligand>
</feature>
<feature type="binding site" evidence="1">
    <location>
        <position position="415"/>
    </location>
    <ligand>
        <name>ATP</name>
        <dbReference type="ChEBI" id="CHEBI:30616"/>
    </ligand>
</feature>
<feature type="binding site" evidence="1">
    <location>
        <begin position="479"/>
        <end position="481"/>
    </location>
    <ligand>
        <name>ATP</name>
        <dbReference type="ChEBI" id="CHEBI:30616"/>
    </ligand>
</feature>
<feature type="binding site" evidence="1">
    <location>
        <position position="495"/>
    </location>
    <ligand>
        <name>ATP</name>
        <dbReference type="ChEBI" id="CHEBI:30616"/>
    </ligand>
</feature>
<name>CH60_DICTD</name>
<proteinExistence type="inferred from homology"/>
<gene>
    <name evidence="1" type="primary">groEL</name>
    <name evidence="1" type="synonym">groL</name>
    <name type="ordered locus">Dtur_0957</name>
</gene>
<evidence type="ECO:0000255" key="1">
    <source>
        <dbReference type="HAMAP-Rule" id="MF_00600"/>
    </source>
</evidence>
<organism>
    <name type="scientific">Dictyoglomus turgidum (strain DSM 6724 / Z-1310)</name>
    <dbReference type="NCBI Taxonomy" id="515635"/>
    <lineage>
        <taxon>Bacteria</taxon>
        <taxon>Pseudomonadati</taxon>
        <taxon>Dictyoglomota</taxon>
        <taxon>Dictyoglomia</taxon>
        <taxon>Dictyoglomales</taxon>
        <taxon>Dictyoglomaceae</taxon>
        <taxon>Dictyoglomus</taxon>
    </lineage>
</organism>
<reference key="1">
    <citation type="journal article" date="2016" name="Front. Microbiol.">
        <title>The complete genome sequence of hyperthermophile Dictyoglomus turgidum DSM 6724 reveals a specialized carbohydrate fermentor.</title>
        <authorList>
            <person name="Brumm P.J."/>
            <person name="Gowda K."/>
            <person name="Robb F.T."/>
            <person name="Mead D.A."/>
        </authorList>
    </citation>
    <scope>NUCLEOTIDE SEQUENCE [LARGE SCALE GENOMIC DNA]</scope>
    <source>
        <strain>DSM 6724 / Z-1310</strain>
    </source>
</reference>
<protein>
    <recommendedName>
        <fullName evidence="1">Chaperonin GroEL</fullName>
        <ecNumber evidence="1">5.6.1.7</ecNumber>
    </recommendedName>
    <alternativeName>
        <fullName evidence="1">60 kDa chaperonin</fullName>
    </alternativeName>
    <alternativeName>
        <fullName evidence="1">Chaperonin-60</fullName>
        <shortName evidence="1">Cpn60</shortName>
    </alternativeName>
</protein>
<sequence>MAAKLVSLDMQARTALIKGLDTVADTVKITLGPKGRNVVLEKKFGAPVITNDGVTIAKEIDLEDPFENMGAQLVKEVASKTNDVAGDGTTTATVLAQALVHEGMKHVVAGANPMYVKRGIEKAVEKVVEELKKIAKPVETKQDIAHVAAISANNDEEIGNLIAEAMDKVGKDGVITVEESQGITTTLELVEGMQFDRGYLSAYMITDPERMEAVLEEPYILITDKKISAVSEILPILERVVQTGKPLVIIAEDVEGEALATLVVNKLRGVLQSLAVKAPGFGDRRKAMLQDIAILTGGQFISEETGIKLENVTLDMLGRAEKVRANKDKTTIIGGKGNKKDIEARIAQIKKQLEETDSEFDREKLQERLAKLAGGVAVIKVGAATEVELKEKKHRIEDALSATKAAVEEGIVPGGGVALIRTIKALDDIKVDNEDERIGVEIVRRSLDVPLKLIANNAGKEGSIIAEKVKEMDGPMGYDAARDRFVNMFDAGIVDPCKVTRSALQNAASIAALVLTTEGLVAEKPEKEKQTPPPPPEY</sequence>